<dbReference type="EC" id="2.7.7.27" evidence="1"/>
<dbReference type="EMBL" id="BA000040">
    <property type="protein sequence ID" value="BAC51723.1"/>
    <property type="molecule type" value="Genomic_DNA"/>
</dbReference>
<dbReference type="RefSeq" id="NP_773098.1">
    <property type="nucleotide sequence ID" value="NC_004463.1"/>
</dbReference>
<dbReference type="RefSeq" id="WP_011089198.1">
    <property type="nucleotide sequence ID" value="NC_004463.1"/>
</dbReference>
<dbReference type="SMR" id="Q89G87"/>
<dbReference type="FunCoup" id="Q89G87">
    <property type="interactions" value="190"/>
</dbReference>
<dbReference type="STRING" id="224911.AAV28_29845"/>
<dbReference type="EnsemblBacteria" id="BAC51723">
    <property type="protein sequence ID" value="BAC51723"/>
    <property type="gene ID" value="BAC51723"/>
</dbReference>
<dbReference type="GeneID" id="46493431"/>
<dbReference type="KEGG" id="bja:blr6458"/>
<dbReference type="PATRIC" id="fig|224911.44.peg.6448"/>
<dbReference type="eggNOG" id="COG0448">
    <property type="taxonomic scope" value="Bacteria"/>
</dbReference>
<dbReference type="HOGENOM" id="CLU_029499_14_1_5"/>
<dbReference type="InParanoid" id="Q89G87"/>
<dbReference type="OrthoDB" id="9801810at2"/>
<dbReference type="PhylomeDB" id="Q89G87"/>
<dbReference type="UniPathway" id="UPA00164"/>
<dbReference type="Proteomes" id="UP000002526">
    <property type="component" value="Chromosome"/>
</dbReference>
<dbReference type="GO" id="GO:0005524">
    <property type="term" value="F:ATP binding"/>
    <property type="evidence" value="ECO:0007669"/>
    <property type="project" value="UniProtKB-KW"/>
</dbReference>
<dbReference type="GO" id="GO:0008878">
    <property type="term" value="F:glucose-1-phosphate adenylyltransferase activity"/>
    <property type="evidence" value="ECO:0007669"/>
    <property type="project" value="UniProtKB-UniRule"/>
</dbReference>
<dbReference type="GO" id="GO:0005978">
    <property type="term" value="P:glycogen biosynthetic process"/>
    <property type="evidence" value="ECO:0007669"/>
    <property type="project" value="UniProtKB-UniRule"/>
</dbReference>
<dbReference type="CDD" id="cd02508">
    <property type="entry name" value="ADP_Glucose_PP"/>
    <property type="match status" value="1"/>
</dbReference>
<dbReference type="CDD" id="cd04651">
    <property type="entry name" value="LbH_G1P_AT_C"/>
    <property type="match status" value="1"/>
</dbReference>
<dbReference type="Gene3D" id="2.160.10.10">
    <property type="entry name" value="Hexapeptide repeat proteins"/>
    <property type="match status" value="1"/>
</dbReference>
<dbReference type="Gene3D" id="3.90.550.10">
    <property type="entry name" value="Spore Coat Polysaccharide Biosynthesis Protein SpsA, Chain A"/>
    <property type="match status" value="1"/>
</dbReference>
<dbReference type="HAMAP" id="MF_00624">
    <property type="entry name" value="GlgC"/>
    <property type="match status" value="1"/>
</dbReference>
<dbReference type="InterPro" id="IPR011831">
    <property type="entry name" value="ADP-Glc_PPase"/>
</dbReference>
<dbReference type="InterPro" id="IPR005836">
    <property type="entry name" value="ADP_Glu_pyroP_CS"/>
</dbReference>
<dbReference type="InterPro" id="IPR023049">
    <property type="entry name" value="GlgC_bac"/>
</dbReference>
<dbReference type="InterPro" id="IPR056818">
    <property type="entry name" value="GlmU/GlgC-like_hexapep"/>
</dbReference>
<dbReference type="InterPro" id="IPR005835">
    <property type="entry name" value="NTP_transferase_dom"/>
</dbReference>
<dbReference type="InterPro" id="IPR029044">
    <property type="entry name" value="Nucleotide-diphossugar_trans"/>
</dbReference>
<dbReference type="InterPro" id="IPR011004">
    <property type="entry name" value="Trimer_LpxA-like_sf"/>
</dbReference>
<dbReference type="NCBIfam" id="TIGR02091">
    <property type="entry name" value="glgC"/>
    <property type="match status" value="1"/>
</dbReference>
<dbReference type="NCBIfam" id="NF001947">
    <property type="entry name" value="PRK00725.1"/>
    <property type="match status" value="1"/>
</dbReference>
<dbReference type="NCBIfam" id="NF002023">
    <property type="entry name" value="PRK00844.1"/>
    <property type="match status" value="1"/>
</dbReference>
<dbReference type="PANTHER" id="PTHR43523:SF2">
    <property type="entry name" value="GLUCOSE-1-PHOSPHATE ADENYLYLTRANSFERASE"/>
    <property type="match status" value="1"/>
</dbReference>
<dbReference type="PANTHER" id="PTHR43523">
    <property type="entry name" value="GLUCOSE-1-PHOSPHATE ADENYLYLTRANSFERASE-RELATED"/>
    <property type="match status" value="1"/>
</dbReference>
<dbReference type="Pfam" id="PF24894">
    <property type="entry name" value="Hexapep_GlmU"/>
    <property type="match status" value="1"/>
</dbReference>
<dbReference type="Pfam" id="PF00483">
    <property type="entry name" value="NTP_transferase"/>
    <property type="match status" value="1"/>
</dbReference>
<dbReference type="SUPFAM" id="SSF53448">
    <property type="entry name" value="Nucleotide-diphospho-sugar transferases"/>
    <property type="match status" value="1"/>
</dbReference>
<dbReference type="SUPFAM" id="SSF51161">
    <property type="entry name" value="Trimeric LpxA-like enzymes"/>
    <property type="match status" value="1"/>
</dbReference>
<dbReference type="PROSITE" id="PS00808">
    <property type="entry name" value="ADP_GLC_PYROPHOSPH_1"/>
    <property type="match status" value="1"/>
</dbReference>
<dbReference type="PROSITE" id="PS00809">
    <property type="entry name" value="ADP_GLC_PYROPHOSPH_2"/>
    <property type="match status" value="1"/>
</dbReference>
<dbReference type="PROSITE" id="PS00810">
    <property type="entry name" value="ADP_GLC_PYROPHOSPH_3"/>
    <property type="match status" value="1"/>
</dbReference>
<comment type="function">
    <text evidence="1">Involved in the biosynthesis of ADP-glucose, a building block required for the elongation reactions to produce glycogen. Catalyzes the reaction between ATP and alpha-D-glucose 1-phosphate (G1P) to produce pyrophosphate and ADP-Glc.</text>
</comment>
<comment type="catalytic activity">
    <reaction evidence="1">
        <text>alpha-D-glucose 1-phosphate + ATP + H(+) = ADP-alpha-D-glucose + diphosphate</text>
        <dbReference type="Rhea" id="RHEA:12120"/>
        <dbReference type="ChEBI" id="CHEBI:15378"/>
        <dbReference type="ChEBI" id="CHEBI:30616"/>
        <dbReference type="ChEBI" id="CHEBI:33019"/>
        <dbReference type="ChEBI" id="CHEBI:57498"/>
        <dbReference type="ChEBI" id="CHEBI:58601"/>
        <dbReference type="EC" id="2.7.7.27"/>
    </reaction>
</comment>
<comment type="pathway">
    <text evidence="1">Glycan biosynthesis; glycogen biosynthesis.</text>
</comment>
<comment type="subunit">
    <text evidence="1">Homotetramer.</text>
</comment>
<comment type="similarity">
    <text evidence="1">Belongs to the bacterial/plant glucose-1-phosphate adenylyltransferase family.</text>
</comment>
<sequence>MSAVGNEPLARQALAFVLAGGRGSRLLELTDRRAKPAVYFGGKSRIIDFALSNAVNSGIRRIAVATQYKAHSLIRHLQMGWNFFRPERNESFDILPASQRVSENMWYVGTADAIYQNIDIIESHNARFIVVLAGDHIYKMDYEVMLRQHVDSGADVTVGCLEMPRAESSGFGIMHIDENGWIQEFLEKPADPPPMPGKPDVSLASMGIYVFDAKFLFDQLKRDAEDPSSNHDFGKDIIPYIVKNGRAIAHQFSTSCVRSGDDPRAYWRDVGTVDAYWAANIDLTDVVPELDLFDRAWPIWSYSEITPPAKFVHDEESRRGQAVSSLVSGGCIISGASLRRSLLFTGVRINSYANVENAVIMPYVNVGRGARLKNVVIDRGVEIPEGLVIGEDPELDAKRFRTTEQGISLITQPMIDRLNT</sequence>
<feature type="chain" id="PRO_0000195286" description="Glucose-1-phosphate adenylyltransferase">
    <location>
        <begin position="1"/>
        <end position="420"/>
    </location>
</feature>
<feature type="binding site" evidence="1">
    <location>
        <position position="107"/>
    </location>
    <ligand>
        <name>alpha-D-glucose 1-phosphate</name>
        <dbReference type="ChEBI" id="CHEBI:58601"/>
    </ligand>
</feature>
<feature type="binding site" evidence="1">
    <location>
        <position position="172"/>
    </location>
    <ligand>
        <name>alpha-D-glucose 1-phosphate</name>
        <dbReference type="ChEBI" id="CHEBI:58601"/>
    </ligand>
</feature>
<feature type="binding site" evidence="1">
    <location>
        <begin position="187"/>
        <end position="188"/>
    </location>
    <ligand>
        <name>alpha-D-glucose 1-phosphate</name>
        <dbReference type="ChEBI" id="CHEBI:58601"/>
    </ligand>
</feature>
<feature type="binding site" evidence="1">
    <location>
        <position position="205"/>
    </location>
    <ligand>
        <name>alpha-D-glucose 1-phosphate</name>
        <dbReference type="ChEBI" id="CHEBI:58601"/>
    </ligand>
</feature>
<name>GLGC_BRADU</name>
<keyword id="KW-0067">ATP-binding</keyword>
<keyword id="KW-0119">Carbohydrate metabolism</keyword>
<keyword id="KW-0320">Glycogen biosynthesis</keyword>
<keyword id="KW-0321">Glycogen metabolism</keyword>
<keyword id="KW-0547">Nucleotide-binding</keyword>
<keyword id="KW-0548">Nucleotidyltransferase</keyword>
<keyword id="KW-1185">Reference proteome</keyword>
<keyword id="KW-0808">Transferase</keyword>
<evidence type="ECO:0000255" key="1">
    <source>
        <dbReference type="HAMAP-Rule" id="MF_00624"/>
    </source>
</evidence>
<proteinExistence type="inferred from homology"/>
<reference key="1">
    <citation type="journal article" date="2002" name="DNA Res.">
        <title>Complete genomic sequence of nitrogen-fixing symbiotic bacterium Bradyrhizobium japonicum USDA110.</title>
        <authorList>
            <person name="Kaneko T."/>
            <person name="Nakamura Y."/>
            <person name="Sato S."/>
            <person name="Minamisawa K."/>
            <person name="Uchiumi T."/>
            <person name="Sasamoto S."/>
            <person name="Watanabe A."/>
            <person name="Idesawa K."/>
            <person name="Iriguchi M."/>
            <person name="Kawashima K."/>
            <person name="Kohara M."/>
            <person name="Matsumoto M."/>
            <person name="Shimpo S."/>
            <person name="Tsuruoka H."/>
            <person name="Wada T."/>
            <person name="Yamada M."/>
            <person name="Tabata S."/>
        </authorList>
    </citation>
    <scope>NUCLEOTIDE SEQUENCE [LARGE SCALE GENOMIC DNA]</scope>
    <source>
        <strain>JCM 10833 / BCRC 13528 / IAM 13628 / NBRC 14792 / USDA 110</strain>
    </source>
</reference>
<accession>Q89G87</accession>
<protein>
    <recommendedName>
        <fullName evidence="1">Glucose-1-phosphate adenylyltransferase</fullName>
        <ecNumber evidence="1">2.7.7.27</ecNumber>
    </recommendedName>
    <alternativeName>
        <fullName evidence="1">ADP-glucose pyrophosphorylase</fullName>
        <shortName evidence="1">ADPGlc PPase</shortName>
    </alternativeName>
    <alternativeName>
        <fullName evidence="1">ADP-glucose synthase</fullName>
    </alternativeName>
</protein>
<gene>
    <name evidence="1" type="primary">glgC</name>
    <name type="ordered locus">blr6458</name>
</gene>
<organism>
    <name type="scientific">Bradyrhizobium diazoefficiens (strain JCM 10833 / BCRC 13528 / IAM 13628 / NBRC 14792 / USDA 110)</name>
    <dbReference type="NCBI Taxonomy" id="224911"/>
    <lineage>
        <taxon>Bacteria</taxon>
        <taxon>Pseudomonadati</taxon>
        <taxon>Pseudomonadota</taxon>
        <taxon>Alphaproteobacteria</taxon>
        <taxon>Hyphomicrobiales</taxon>
        <taxon>Nitrobacteraceae</taxon>
        <taxon>Bradyrhizobium</taxon>
    </lineage>
</organism>